<reference key="1">
    <citation type="submission" date="2005-10" db="EMBL/GenBank/DDBJ databases">
        <title>Complete sequence of chromosome 1 of Burkholderia sp. 383.</title>
        <authorList>
            <consortium name="US DOE Joint Genome Institute"/>
            <person name="Copeland A."/>
            <person name="Lucas S."/>
            <person name="Lapidus A."/>
            <person name="Barry K."/>
            <person name="Detter J.C."/>
            <person name="Glavina T."/>
            <person name="Hammon N."/>
            <person name="Israni S."/>
            <person name="Pitluck S."/>
            <person name="Chain P."/>
            <person name="Malfatti S."/>
            <person name="Shin M."/>
            <person name="Vergez L."/>
            <person name="Schmutz J."/>
            <person name="Larimer F."/>
            <person name="Land M."/>
            <person name="Kyrpides N."/>
            <person name="Lykidis A."/>
            <person name="Richardson P."/>
        </authorList>
    </citation>
    <scope>NUCLEOTIDE SEQUENCE [LARGE SCALE GENOMIC DNA]</scope>
    <source>
        <strain>ATCC 17760 / DSM 23089 / LMG 22485 / NCIMB 9086 / R18194 / 383</strain>
    </source>
</reference>
<comment type="function">
    <text evidence="1">With CysN forms the ATP sulfurylase (ATPS) that catalyzes the adenylation of sulfate producing adenosine 5'-phosphosulfate (APS) and diphosphate, the first enzymatic step in sulfur assimilation pathway. APS synthesis involves the formation of a high-energy phosphoric-sulfuric acid anhydride bond driven by GTP hydrolysis by CysN coupled to ATP hydrolysis by CysD.</text>
</comment>
<comment type="catalytic activity">
    <reaction evidence="1">
        <text>sulfate + ATP + H(+) = adenosine 5'-phosphosulfate + diphosphate</text>
        <dbReference type="Rhea" id="RHEA:18133"/>
        <dbReference type="ChEBI" id="CHEBI:15378"/>
        <dbReference type="ChEBI" id="CHEBI:16189"/>
        <dbReference type="ChEBI" id="CHEBI:30616"/>
        <dbReference type="ChEBI" id="CHEBI:33019"/>
        <dbReference type="ChEBI" id="CHEBI:58243"/>
        <dbReference type="EC" id="2.7.7.4"/>
    </reaction>
</comment>
<comment type="pathway">
    <text evidence="1">Sulfur metabolism; hydrogen sulfide biosynthesis; sulfite from sulfate: step 1/3.</text>
</comment>
<comment type="subunit">
    <text evidence="1">Heterodimer composed of CysD, the smaller subunit, and CysN.</text>
</comment>
<comment type="similarity">
    <text evidence="1">Belongs to the PAPS reductase family. CysD subfamily.</text>
</comment>
<dbReference type="EC" id="2.7.7.4" evidence="1"/>
<dbReference type="EMBL" id="CP000151">
    <property type="protein sequence ID" value="ABB09089.1"/>
    <property type="molecule type" value="Genomic_DNA"/>
</dbReference>
<dbReference type="RefSeq" id="WP_011352623.1">
    <property type="nucleotide sequence ID" value="NC_007510.1"/>
</dbReference>
<dbReference type="SMR" id="Q39EM7"/>
<dbReference type="GeneID" id="45095376"/>
<dbReference type="KEGG" id="bur:Bcep18194_A5495"/>
<dbReference type="PATRIC" id="fig|482957.22.peg.2453"/>
<dbReference type="HOGENOM" id="CLU_043026_0_0_4"/>
<dbReference type="UniPathway" id="UPA00140">
    <property type="reaction ID" value="UER00204"/>
</dbReference>
<dbReference type="Proteomes" id="UP000002705">
    <property type="component" value="Chromosome 1"/>
</dbReference>
<dbReference type="GO" id="GO:0005524">
    <property type="term" value="F:ATP binding"/>
    <property type="evidence" value="ECO:0007669"/>
    <property type="project" value="UniProtKB-KW"/>
</dbReference>
<dbReference type="GO" id="GO:0004781">
    <property type="term" value="F:sulfate adenylyltransferase (ATP) activity"/>
    <property type="evidence" value="ECO:0007669"/>
    <property type="project" value="UniProtKB-UniRule"/>
</dbReference>
<dbReference type="GO" id="GO:0070814">
    <property type="term" value="P:hydrogen sulfide biosynthetic process"/>
    <property type="evidence" value="ECO:0007669"/>
    <property type="project" value="UniProtKB-UniRule"/>
</dbReference>
<dbReference type="GO" id="GO:0000103">
    <property type="term" value="P:sulfate assimilation"/>
    <property type="evidence" value="ECO:0007669"/>
    <property type="project" value="UniProtKB-UniRule"/>
</dbReference>
<dbReference type="CDD" id="cd23946">
    <property type="entry name" value="Sulfate_adenylyltransferase_2"/>
    <property type="match status" value="1"/>
</dbReference>
<dbReference type="FunFam" id="3.40.50.620:FF:000002">
    <property type="entry name" value="Sulfate adenylyltransferase subunit 2"/>
    <property type="match status" value="1"/>
</dbReference>
<dbReference type="Gene3D" id="3.40.50.620">
    <property type="entry name" value="HUPs"/>
    <property type="match status" value="1"/>
</dbReference>
<dbReference type="HAMAP" id="MF_00064">
    <property type="entry name" value="Sulf_adenylyltr_sub2"/>
    <property type="match status" value="1"/>
</dbReference>
<dbReference type="InterPro" id="IPR002500">
    <property type="entry name" value="PAPS_reduct_dom"/>
</dbReference>
<dbReference type="InterPro" id="IPR014729">
    <property type="entry name" value="Rossmann-like_a/b/a_fold"/>
</dbReference>
<dbReference type="InterPro" id="IPR011784">
    <property type="entry name" value="SO4_adenylTrfase_ssu"/>
</dbReference>
<dbReference type="InterPro" id="IPR050128">
    <property type="entry name" value="Sulfate_adenylyltrnsfr_sub2"/>
</dbReference>
<dbReference type="NCBIfam" id="TIGR02039">
    <property type="entry name" value="CysD"/>
    <property type="match status" value="1"/>
</dbReference>
<dbReference type="NCBIfam" id="NF003587">
    <property type="entry name" value="PRK05253.1"/>
    <property type="match status" value="1"/>
</dbReference>
<dbReference type="NCBIfam" id="NF009214">
    <property type="entry name" value="PRK12563.1"/>
    <property type="match status" value="1"/>
</dbReference>
<dbReference type="PANTHER" id="PTHR43196">
    <property type="entry name" value="SULFATE ADENYLYLTRANSFERASE SUBUNIT 2"/>
    <property type="match status" value="1"/>
</dbReference>
<dbReference type="PANTHER" id="PTHR43196:SF1">
    <property type="entry name" value="SULFATE ADENYLYLTRANSFERASE SUBUNIT 2"/>
    <property type="match status" value="1"/>
</dbReference>
<dbReference type="Pfam" id="PF01507">
    <property type="entry name" value="PAPS_reduct"/>
    <property type="match status" value="1"/>
</dbReference>
<dbReference type="PIRSF" id="PIRSF002936">
    <property type="entry name" value="CysDAde_trans"/>
    <property type="match status" value="1"/>
</dbReference>
<dbReference type="SUPFAM" id="SSF52402">
    <property type="entry name" value="Adenine nucleotide alpha hydrolases-like"/>
    <property type="match status" value="1"/>
</dbReference>
<name>CYSD_BURL3</name>
<proteinExistence type="inferred from homology"/>
<keyword id="KW-0067">ATP-binding</keyword>
<keyword id="KW-0547">Nucleotide-binding</keyword>
<keyword id="KW-0548">Nucleotidyltransferase</keyword>
<keyword id="KW-0808">Transferase</keyword>
<gene>
    <name evidence="1" type="primary">cysD</name>
    <name type="ordered locus">Bcep18194_A5495</name>
</gene>
<accession>Q39EM7</accession>
<protein>
    <recommendedName>
        <fullName evidence="1">Sulfate adenylyltransferase subunit 2</fullName>
        <ecNumber evidence="1">2.7.7.4</ecNumber>
    </recommendedName>
    <alternativeName>
        <fullName evidence="1">ATP-sulfurylase small subunit</fullName>
    </alternativeName>
    <alternativeName>
        <fullName evidence="1">Sulfate adenylate transferase</fullName>
        <shortName evidence="1">SAT</shortName>
    </alternativeName>
</protein>
<feature type="chain" id="PRO_0000340189" description="Sulfate adenylyltransferase subunit 2">
    <location>
        <begin position="1"/>
        <end position="298"/>
    </location>
</feature>
<feature type="region of interest" description="Disordered" evidence="2">
    <location>
        <begin position="272"/>
        <end position="298"/>
    </location>
</feature>
<feature type="compositionally biased region" description="Basic and acidic residues" evidence="2">
    <location>
        <begin position="272"/>
        <end position="282"/>
    </location>
</feature>
<feature type="compositionally biased region" description="Basic and acidic residues" evidence="2">
    <location>
        <begin position="289"/>
        <end position="298"/>
    </location>
</feature>
<organism>
    <name type="scientific">Burkholderia lata (strain ATCC 17760 / DSM 23089 / LMG 22485 / NCIMB 9086 / R18194 / 383)</name>
    <dbReference type="NCBI Taxonomy" id="482957"/>
    <lineage>
        <taxon>Bacteria</taxon>
        <taxon>Pseudomonadati</taxon>
        <taxon>Pseudomonadota</taxon>
        <taxon>Betaproteobacteria</taxon>
        <taxon>Burkholderiales</taxon>
        <taxon>Burkholderiaceae</taxon>
        <taxon>Burkholderia</taxon>
        <taxon>Burkholderia cepacia complex</taxon>
    </lineage>
</organism>
<evidence type="ECO:0000255" key="1">
    <source>
        <dbReference type="HAMAP-Rule" id="MF_00064"/>
    </source>
</evidence>
<evidence type="ECO:0000256" key="2">
    <source>
        <dbReference type="SAM" id="MobiDB-lite"/>
    </source>
</evidence>
<sequence>MLTHLERLEAESIHIMREVVAESENPVMLYSIGKDSSVMLHLAMKAFYPAKPPFPLLHVDTTWKFREMIAFRDETAARLGLDLRVHINPDGVANGIDPFTHGSAVHTDVWKTQGLKQALDHYGFDAAFGGARRDEEKSRAKERIVSLRSEQHRWDPKRQRPELWSLYNARKRKGESLRVFPISNWTELDIWQYIQLHDIPIVPLYFAKERPVVERDGALIMVDDERLPLREGEVPQMRKVRFRTLGCYPLTGAIDSDATSLDDILQEMRETRTSERQGRLIDSDSAGSMEKKKQEGYF</sequence>